<protein>
    <recommendedName>
        <fullName>High osmolarity signaling protein MOS1</fullName>
    </recommendedName>
    <alternativeName>
        <fullName>Osmosensor MOS1</fullName>
    </alternativeName>
</protein>
<reference key="1">
    <citation type="journal article" date="2008" name="Eukaryot. Cell">
        <title>MOS1 osmosensor of Metarhizium anisopliae is required for adaptation to insect host hemolymph.</title>
        <authorList>
            <person name="Wang C."/>
            <person name="Duan Z."/>
            <person name="St Leger R.J."/>
        </authorList>
    </citation>
    <scope>NUCLEOTIDE SEQUENCE [GENOMIC DNA]</scope>
    <scope>INDUCTION</scope>
    <scope>FUNCTION</scope>
    <source>
        <strain>ARSEF 2575</strain>
    </source>
</reference>
<reference key="2">
    <citation type="journal article" date="2011" name="PLoS Genet.">
        <title>Genome sequencing and comparative transcriptomics of the model entomopathogenic fungi Metarhizium anisopliae and M. acridum.</title>
        <authorList>
            <person name="Gao Q."/>
            <person name="Jin K."/>
            <person name="Ying S.-H."/>
            <person name="Zhang Y."/>
            <person name="Xiao G."/>
            <person name="Shang Y."/>
            <person name="Duan Z."/>
            <person name="Hu X."/>
            <person name="Xie X.-Q."/>
            <person name="Zhou G."/>
            <person name="Peng G."/>
            <person name="Luo Z."/>
            <person name="Huang W."/>
            <person name="Wang B."/>
            <person name="Fang W."/>
            <person name="Wang S."/>
            <person name="Zhong Y."/>
            <person name="Ma L.-J."/>
            <person name="St Leger R.J."/>
            <person name="Zhao G.-P."/>
            <person name="Pei Y."/>
            <person name="Feng M.-G."/>
            <person name="Xia Y."/>
            <person name="Wang C."/>
        </authorList>
    </citation>
    <scope>NUCLEOTIDE SEQUENCE [LARGE SCALE GENOMIC DNA]</scope>
    <source>
        <strain>ARSEF 23 / ATCC MYA-3075</strain>
    </source>
</reference>
<reference key="3">
    <citation type="journal article" date="2014" name="Proc. Natl. Acad. Sci. U.S.A.">
        <title>Trajectory and genomic determinants of fungal-pathogen speciation and host adaptation.</title>
        <authorList>
            <person name="Hu X."/>
            <person name="Xiao G."/>
            <person name="Zheng P."/>
            <person name="Shang Y."/>
            <person name="Su Y."/>
            <person name="Zhang X."/>
            <person name="Liu X."/>
            <person name="Zhan S."/>
            <person name="St Leger R.J."/>
            <person name="Wang C."/>
        </authorList>
    </citation>
    <scope>GENOME REANNOTATION</scope>
    <source>
        <strain>ARSEF 23 / ATCC MYA-3075</strain>
    </source>
</reference>
<keyword id="KW-1003">Cell membrane</keyword>
<keyword id="KW-0472">Membrane</keyword>
<keyword id="KW-0728">SH3 domain</keyword>
<keyword id="KW-0346">Stress response</keyword>
<keyword id="KW-0812">Transmembrane</keyword>
<keyword id="KW-1133">Transmembrane helix</keyword>
<feature type="chain" id="PRO_0000410383" description="High osmolarity signaling protein MOS1">
    <location>
        <begin position="1"/>
        <end position="306"/>
    </location>
</feature>
<feature type="topological domain" description="Cytoplasmic" evidence="2">
    <location>
        <begin position="1"/>
        <end position="23"/>
    </location>
</feature>
<feature type="transmembrane region" description="Helical" evidence="2">
    <location>
        <begin position="24"/>
        <end position="44"/>
    </location>
</feature>
<feature type="topological domain" description="Extracellular" evidence="2">
    <location>
        <begin position="45"/>
        <end position="67"/>
    </location>
</feature>
<feature type="transmembrane region" description="Helical" evidence="2">
    <location>
        <begin position="68"/>
        <end position="88"/>
    </location>
</feature>
<feature type="topological domain" description="Cytoplasmic" evidence="2">
    <location>
        <begin position="89"/>
        <end position="96"/>
    </location>
</feature>
<feature type="transmembrane region" description="Helical" evidence="2">
    <location>
        <begin position="97"/>
        <end position="117"/>
    </location>
</feature>
<feature type="topological domain" description="Extracellular" evidence="2">
    <location>
        <begin position="118"/>
        <end position="126"/>
    </location>
</feature>
<feature type="transmembrane region" description="Helical" evidence="2">
    <location>
        <begin position="127"/>
        <end position="147"/>
    </location>
</feature>
<feature type="topological domain" description="Cytoplasmic" evidence="2">
    <location>
        <begin position="148"/>
        <end position="306"/>
    </location>
</feature>
<feature type="domain" description="SH3" evidence="3">
    <location>
        <begin position="246"/>
        <end position="306"/>
    </location>
</feature>
<feature type="region of interest" description="Disordered" evidence="4">
    <location>
        <begin position="204"/>
        <end position="242"/>
    </location>
</feature>
<feature type="compositionally biased region" description="Polar residues" evidence="4">
    <location>
        <begin position="224"/>
        <end position="235"/>
    </location>
</feature>
<comment type="function">
    <text evidence="5">Plasma membrane osmosensor that activates the high osmolarity glycerol (HOG) MAPK signaling pathway in response to high osmolarity. Affects fungal virulence.</text>
</comment>
<comment type="subunit">
    <text evidence="1">Forms homooligomers.</text>
</comment>
<comment type="subcellular location">
    <subcellularLocation>
        <location evidence="1">Cell membrane</location>
        <topology evidence="1">Multi-pass membrane protein</topology>
    </subcellularLocation>
</comment>
<comment type="induction">
    <text evidence="5">Expression is up-regulated in insect hemolymph or in artificial media with high osmolarity. Also induced by heat (37 gegrees Celsius) and oxidative stress.</text>
</comment>
<comment type="similarity">
    <text evidence="6">Belongs to the SHO1 family.</text>
</comment>
<evidence type="ECO:0000250" key="1"/>
<evidence type="ECO:0000255" key="2"/>
<evidence type="ECO:0000255" key="3">
    <source>
        <dbReference type="PROSITE-ProRule" id="PRU00192"/>
    </source>
</evidence>
<evidence type="ECO:0000256" key="4">
    <source>
        <dbReference type="SAM" id="MobiDB-lite"/>
    </source>
</evidence>
<evidence type="ECO:0000269" key="5">
    <source>
    </source>
</evidence>
<evidence type="ECO:0000305" key="6"/>
<organism>
    <name type="scientific">Metarhizium robertsii (strain ARSEF 23 / ATCC MYA-3075)</name>
    <name type="common">Metarhizium anisopliae (strain ARSEF 23)</name>
    <dbReference type="NCBI Taxonomy" id="655844"/>
    <lineage>
        <taxon>Eukaryota</taxon>
        <taxon>Fungi</taxon>
        <taxon>Dikarya</taxon>
        <taxon>Ascomycota</taxon>
        <taxon>Pezizomycotina</taxon>
        <taxon>Sordariomycetes</taxon>
        <taxon>Hypocreomycetidae</taxon>
        <taxon>Hypocreales</taxon>
        <taxon>Clavicipitaceae</taxon>
        <taxon>Metarhizium</taxon>
    </lineage>
</organism>
<name>SHO1_METRA</name>
<proteinExistence type="evidence at transcript level"/>
<gene>
    <name type="primary">MOS1</name>
    <name type="synonym">SHO1</name>
    <name type="ORF">MAA_01571</name>
</gene>
<dbReference type="EMBL" id="EU106866">
    <property type="protein sequence ID" value="ABU94675.1"/>
    <property type="molecule type" value="mRNA"/>
</dbReference>
<dbReference type="EMBL" id="ADNJ02000009">
    <property type="protein sequence ID" value="EFZ04497.1"/>
    <property type="molecule type" value="Genomic_DNA"/>
</dbReference>
<dbReference type="RefSeq" id="XP_007817760.1">
    <property type="nucleotide sequence ID" value="XM_007819569.1"/>
</dbReference>
<dbReference type="SMR" id="E9EM69"/>
<dbReference type="GeneID" id="19255857"/>
<dbReference type="KEGG" id="maj:MAA_01571"/>
<dbReference type="HOGENOM" id="CLU_043316_1_0_1"/>
<dbReference type="OrthoDB" id="5983572at2759"/>
<dbReference type="Proteomes" id="UP000002498">
    <property type="component" value="Unassembled WGS sequence"/>
</dbReference>
<dbReference type="GO" id="GO:0005886">
    <property type="term" value="C:plasma membrane"/>
    <property type="evidence" value="ECO:0007669"/>
    <property type="project" value="UniProtKB-SubCell"/>
</dbReference>
<dbReference type="CDD" id="cd11855">
    <property type="entry name" value="SH3_Sho1p"/>
    <property type="match status" value="1"/>
</dbReference>
<dbReference type="Gene3D" id="2.30.30.40">
    <property type="entry name" value="SH3 Domains"/>
    <property type="match status" value="1"/>
</dbReference>
<dbReference type="InterPro" id="IPR036028">
    <property type="entry name" value="SH3-like_dom_sf"/>
</dbReference>
<dbReference type="InterPro" id="IPR001452">
    <property type="entry name" value="SH3_domain"/>
</dbReference>
<dbReference type="InterPro" id="IPR035522">
    <property type="entry name" value="Sho1_SH3"/>
</dbReference>
<dbReference type="Pfam" id="PF00018">
    <property type="entry name" value="SH3_1"/>
    <property type="match status" value="1"/>
</dbReference>
<dbReference type="SMART" id="SM00326">
    <property type="entry name" value="SH3"/>
    <property type="match status" value="1"/>
</dbReference>
<dbReference type="SUPFAM" id="SSF50044">
    <property type="entry name" value="SH3-domain"/>
    <property type="match status" value="1"/>
</dbReference>
<dbReference type="PROSITE" id="PS50002">
    <property type="entry name" value="SH3"/>
    <property type="match status" value="1"/>
</dbReference>
<accession>E9EM69</accession>
<accession>A7XZS8</accession>
<sequence>MEHSRPYGGRKRMSLGNILGDPFALATISISLLAWFITFISCVIAQVQANKNKGLPDKDNPDGNFPPFAWWAVVYSLFLIVGVVIVVASDAIQTYHVAVTGYLAGGMVLVTSGVNSLVYSKNGAREAAAAGFILLSMVVIVWIFYFGSTPSSTPRAFLDSFALSKDSGAMHNQAMNGYGGTGRPETSNSVQPPQMYTSAQLNGFENPSPVGGASQAPTAPTMPTYGNNTMQPNNKSNDEEVLPPIDYPYQAKAIYSYEANPSDANEISFSKHEILDVSDVSGRWWQARRRGTNEIGIAPSNYLILL</sequence>